<proteinExistence type="evidence at transcript level"/>
<protein>
    <recommendedName>
        <fullName>Collagen and calcium-binding EGF domain-containing protein 1</fullName>
    </recommendedName>
    <alternativeName>
        <fullName>Full of fluid protein homolog</fullName>
    </alternativeName>
</protein>
<keyword id="KW-0037">Angiogenesis</keyword>
<keyword id="KW-0106">Calcium</keyword>
<keyword id="KW-0176">Collagen</keyword>
<keyword id="KW-0217">Developmental protein</keyword>
<keyword id="KW-1015">Disulfide bond</keyword>
<keyword id="KW-0245">EGF-like domain</keyword>
<keyword id="KW-0325">Glycoprotein</keyword>
<keyword id="KW-0654">Proteoglycan</keyword>
<keyword id="KW-1185">Reference proteome</keyword>
<keyword id="KW-0677">Repeat</keyword>
<keyword id="KW-0964">Secreted</keyword>
<keyword id="KW-0732">Signal</keyword>
<sequence>MVPPPLPSRGGAAKRQLGKSLGPLLLLLALGHTWTYREEPEDRDREVCSENKITTTKYPCLKSSGELTTCFRKKCCKGYKFVLGQCIPEDYDICAQAPCEQQCTDNFGRVLCTCYPGYRYDRERHQKRERPYCLDIDECATSNTTLCAHICINTMGSYHCECREGYILEDDGRTCTRGDKYPNDTGHEEKSENEVKAGTCCATCKEFSQMKQTVLQLKQKMALLPNNAAELGKYVNGDKVLASNAYLPGPPGLPGGQGPPGSPGPKGSPGFPGMPGPPGQPGPRGSMGPMGPSPDLSHIKQGRRGPVGPPGAPGRHGSKGERGAPGPPGSPGPPGSFDFLLLVLADIRNDIAELQEKVFGHRTHSSAEDFPLPQEFSSYPETLDFGSGDDYSRRTEARDPEAPRNFYP</sequence>
<dbReference type="EMBL" id="AK028377">
    <property type="protein sequence ID" value="BAC25916.1"/>
    <property type="molecule type" value="mRNA"/>
</dbReference>
<dbReference type="EMBL" id="AK035153">
    <property type="protein sequence ID" value="BAC28962.1"/>
    <property type="molecule type" value="mRNA"/>
</dbReference>
<dbReference type="EMBL" id="AK039742">
    <property type="protein sequence ID" value="BAC30435.1"/>
    <property type="molecule type" value="mRNA"/>
</dbReference>
<dbReference type="EMBL" id="AK220435">
    <property type="protein sequence ID" value="BAD90476.1"/>
    <property type="status" value="ALT_INIT"/>
    <property type="molecule type" value="mRNA"/>
</dbReference>
<dbReference type="EMBL" id="BC103803">
    <property type="protein sequence ID" value="AAI03804.1"/>
    <property type="molecule type" value="mRNA"/>
</dbReference>
<dbReference type="EMBL" id="BC152322">
    <property type="protein sequence ID" value="AAI52323.1"/>
    <property type="molecule type" value="mRNA"/>
</dbReference>
<dbReference type="CCDS" id="CCDS29314.1"/>
<dbReference type="RefSeq" id="NP_848908.1">
    <property type="nucleotide sequence ID" value="NM_178793.4"/>
</dbReference>
<dbReference type="FunCoup" id="Q3MI99">
    <property type="interactions" value="202"/>
</dbReference>
<dbReference type="STRING" id="10090.ENSMUSP00000117636"/>
<dbReference type="GlyCosmos" id="Q3MI99">
    <property type="glycosylation" value="2 sites, No reported glycans"/>
</dbReference>
<dbReference type="GlyGen" id="Q3MI99">
    <property type="glycosylation" value="3 sites, 1 N-linked glycan (1 site)"/>
</dbReference>
<dbReference type="iPTMnet" id="Q3MI99"/>
<dbReference type="PhosphoSitePlus" id="Q3MI99"/>
<dbReference type="PaxDb" id="10090-ENSMUSP00000117636"/>
<dbReference type="PeptideAtlas" id="Q3MI99"/>
<dbReference type="ProteomicsDB" id="265703"/>
<dbReference type="Antibodypedia" id="22986">
    <property type="antibodies" value="189 antibodies from 28 providers"/>
</dbReference>
<dbReference type="DNASU" id="320924"/>
<dbReference type="Ensembl" id="ENSMUST00000061103.14">
    <property type="protein sequence ID" value="ENSMUSP00000052011.8"/>
    <property type="gene ID" value="ENSMUSG00000046318.17"/>
</dbReference>
<dbReference type="Ensembl" id="ENSMUST00000130300.3">
    <property type="protein sequence ID" value="ENSMUSP00000117636.2"/>
    <property type="gene ID" value="ENSMUSG00000046318.17"/>
</dbReference>
<dbReference type="GeneID" id="320924"/>
<dbReference type="KEGG" id="mmu:320924"/>
<dbReference type="UCSC" id="uc008ffr.1">
    <property type="organism name" value="mouse"/>
</dbReference>
<dbReference type="AGR" id="MGI:2445053"/>
<dbReference type="CTD" id="147372"/>
<dbReference type="MGI" id="MGI:2445053">
    <property type="gene designation" value="Ccbe1"/>
</dbReference>
<dbReference type="VEuPathDB" id="HostDB:ENSMUSG00000046318"/>
<dbReference type="eggNOG" id="KOG1218">
    <property type="taxonomic scope" value="Eukaryota"/>
</dbReference>
<dbReference type="GeneTree" id="ENSGT00390000014907"/>
<dbReference type="HOGENOM" id="CLU_062964_0_0_1"/>
<dbReference type="InParanoid" id="Q3MI99"/>
<dbReference type="OMA" id="VMKAGTC"/>
<dbReference type="OrthoDB" id="9946071at2759"/>
<dbReference type="PhylomeDB" id="Q3MI99"/>
<dbReference type="TreeFam" id="TF333138"/>
<dbReference type="BioGRID-ORCS" id="320924">
    <property type="hits" value="1 hit in 78 CRISPR screens"/>
</dbReference>
<dbReference type="ChiTaRS" id="Ccbe1">
    <property type="organism name" value="mouse"/>
</dbReference>
<dbReference type="PRO" id="PR:Q3MI99"/>
<dbReference type="Proteomes" id="UP000000589">
    <property type="component" value="Chromosome 18"/>
</dbReference>
<dbReference type="RNAct" id="Q3MI99">
    <property type="molecule type" value="protein"/>
</dbReference>
<dbReference type="Bgee" id="ENSMUSG00000046318">
    <property type="expression patterns" value="Expressed in pericardium and 156 other cell types or tissues"/>
</dbReference>
<dbReference type="ExpressionAtlas" id="Q3MI99">
    <property type="expression patterns" value="baseline and differential"/>
</dbReference>
<dbReference type="GO" id="GO:0005581">
    <property type="term" value="C:collagen trimer"/>
    <property type="evidence" value="ECO:0007669"/>
    <property type="project" value="UniProtKB-KW"/>
</dbReference>
<dbReference type="GO" id="GO:0031012">
    <property type="term" value="C:extracellular matrix"/>
    <property type="evidence" value="ECO:0000266"/>
    <property type="project" value="MGI"/>
</dbReference>
<dbReference type="GO" id="GO:0005615">
    <property type="term" value="C:extracellular space"/>
    <property type="evidence" value="ECO:0007669"/>
    <property type="project" value="Ensembl"/>
</dbReference>
<dbReference type="GO" id="GO:0005509">
    <property type="term" value="F:calcium ion binding"/>
    <property type="evidence" value="ECO:0007669"/>
    <property type="project" value="InterPro"/>
</dbReference>
<dbReference type="GO" id="GO:0005518">
    <property type="term" value="F:collagen binding"/>
    <property type="evidence" value="ECO:0000266"/>
    <property type="project" value="MGI"/>
</dbReference>
<dbReference type="GO" id="GO:0002020">
    <property type="term" value="F:protease binding"/>
    <property type="evidence" value="ECO:0007669"/>
    <property type="project" value="Ensembl"/>
</dbReference>
<dbReference type="GO" id="GO:0043542">
    <property type="term" value="P:endothelial cell migration"/>
    <property type="evidence" value="ECO:0000315"/>
    <property type="project" value="MGI"/>
</dbReference>
<dbReference type="GO" id="GO:0030324">
    <property type="term" value="P:lung development"/>
    <property type="evidence" value="ECO:0000315"/>
    <property type="project" value="MGI"/>
</dbReference>
<dbReference type="GO" id="GO:0001945">
    <property type="term" value="P:lymph vessel development"/>
    <property type="evidence" value="ECO:0000315"/>
    <property type="project" value="MGI"/>
</dbReference>
<dbReference type="GO" id="GO:0001946">
    <property type="term" value="P:lymphangiogenesis"/>
    <property type="evidence" value="ECO:0000315"/>
    <property type="project" value="MGI"/>
</dbReference>
<dbReference type="GO" id="GO:1904977">
    <property type="term" value="P:lymphatic endothelial cell migration"/>
    <property type="evidence" value="ECO:0000315"/>
    <property type="project" value="MGI"/>
</dbReference>
<dbReference type="GO" id="GO:0045766">
    <property type="term" value="P:positive regulation of angiogenesis"/>
    <property type="evidence" value="ECO:0000314"/>
    <property type="project" value="BHF-UCL"/>
</dbReference>
<dbReference type="GO" id="GO:0010595">
    <property type="term" value="P:positive regulation of endothelial cell migration"/>
    <property type="evidence" value="ECO:0000315"/>
    <property type="project" value="MGI"/>
</dbReference>
<dbReference type="GO" id="GO:1901492">
    <property type="term" value="P:positive regulation of lymphangiogenesis"/>
    <property type="evidence" value="ECO:0000314"/>
    <property type="project" value="BHF-UCL"/>
</dbReference>
<dbReference type="GO" id="GO:0010954">
    <property type="term" value="P:positive regulation of protein processing"/>
    <property type="evidence" value="ECO:0007669"/>
    <property type="project" value="Ensembl"/>
</dbReference>
<dbReference type="GO" id="GO:0010575">
    <property type="term" value="P:positive regulation of vascular endothelial growth factor production"/>
    <property type="evidence" value="ECO:0007669"/>
    <property type="project" value="Ensembl"/>
</dbReference>
<dbReference type="GO" id="GO:1900748">
    <property type="term" value="P:positive regulation of vascular endothelial growth factor signaling pathway"/>
    <property type="evidence" value="ECO:0007669"/>
    <property type="project" value="Ensembl"/>
</dbReference>
<dbReference type="GO" id="GO:0007585">
    <property type="term" value="P:respiratory gaseous exchange by respiratory system"/>
    <property type="evidence" value="ECO:0000315"/>
    <property type="project" value="MGI"/>
</dbReference>
<dbReference type="GO" id="GO:0003016">
    <property type="term" value="P:respiratory system process"/>
    <property type="evidence" value="ECO:0000315"/>
    <property type="project" value="MGI"/>
</dbReference>
<dbReference type="GO" id="GO:0002040">
    <property type="term" value="P:sprouting angiogenesis"/>
    <property type="evidence" value="ECO:0000250"/>
    <property type="project" value="UniProtKB"/>
</dbReference>
<dbReference type="GO" id="GO:0048845">
    <property type="term" value="P:venous blood vessel morphogenesis"/>
    <property type="evidence" value="ECO:0000250"/>
    <property type="project" value="UniProtKB"/>
</dbReference>
<dbReference type="CDD" id="cd00054">
    <property type="entry name" value="EGF_CA"/>
    <property type="match status" value="1"/>
</dbReference>
<dbReference type="FunFam" id="2.10.25.10:FF:000010">
    <property type="entry name" value="Pro-epidermal growth factor"/>
    <property type="match status" value="1"/>
</dbReference>
<dbReference type="Gene3D" id="2.10.25.10">
    <property type="entry name" value="Laminin"/>
    <property type="match status" value="2"/>
</dbReference>
<dbReference type="InterPro" id="IPR008160">
    <property type="entry name" value="Collagen"/>
</dbReference>
<dbReference type="InterPro" id="IPR001881">
    <property type="entry name" value="EGF-like_Ca-bd_dom"/>
</dbReference>
<dbReference type="InterPro" id="IPR000742">
    <property type="entry name" value="EGF-like_dom"/>
</dbReference>
<dbReference type="InterPro" id="IPR000152">
    <property type="entry name" value="EGF-type_Asp/Asn_hydroxyl_site"/>
</dbReference>
<dbReference type="InterPro" id="IPR018097">
    <property type="entry name" value="EGF_Ca-bd_CS"/>
</dbReference>
<dbReference type="PANTHER" id="PTHR24637">
    <property type="entry name" value="COLLAGEN"/>
    <property type="match status" value="1"/>
</dbReference>
<dbReference type="PANTHER" id="PTHR24637:SF396">
    <property type="entry name" value="COLLAGEN AND CALCIUM BINDING EGF DOMAINS 1"/>
    <property type="match status" value="1"/>
</dbReference>
<dbReference type="Pfam" id="PF01391">
    <property type="entry name" value="Collagen"/>
    <property type="match status" value="1"/>
</dbReference>
<dbReference type="Pfam" id="PF14670">
    <property type="entry name" value="FXa_inhibition"/>
    <property type="match status" value="1"/>
</dbReference>
<dbReference type="SMART" id="SM00181">
    <property type="entry name" value="EGF"/>
    <property type="match status" value="2"/>
</dbReference>
<dbReference type="SMART" id="SM00179">
    <property type="entry name" value="EGF_CA"/>
    <property type="match status" value="2"/>
</dbReference>
<dbReference type="SUPFAM" id="SSF57196">
    <property type="entry name" value="EGF/Laminin"/>
    <property type="match status" value="2"/>
</dbReference>
<dbReference type="PROSITE" id="PS00010">
    <property type="entry name" value="ASX_HYDROXYL"/>
    <property type="match status" value="1"/>
</dbReference>
<dbReference type="PROSITE" id="PS01186">
    <property type="entry name" value="EGF_2"/>
    <property type="match status" value="1"/>
</dbReference>
<dbReference type="PROSITE" id="PS50026">
    <property type="entry name" value="EGF_3"/>
    <property type="match status" value="1"/>
</dbReference>
<dbReference type="PROSITE" id="PS01187">
    <property type="entry name" value="EGF_CA"/>
    <property type="match status" value="1"/>
</dbReference>
<organism>
    <name type="scientific">Mus musculus</name>
    <name type="common">Mouse</name>
    <dbReference type="NCBI Taxonomy" id="10090"/>
    <lineage>
        <taxon>Eukaryota</taxon>
        <taxon>Metazoa</taxon>
        <taxon>Chordata</taxon>
        <taxon>Craniata</taxon>
        <taxon>Vertebrata</taxon>
        <taxon>Euteleostomi</taxon>
        <taxon>Mammalia</taxon>
        <taxon>Eutheria</taxon>
        <taxon>Euarchontoglires</taxon>
        <taxon>Glires</taxon>
        <taxon>Rodentia</taxon>
        <taxon>Myomorpha</taxon>
        <taxon>Muroidea</taxon>
        <taxon>Muridae</taxon>
        <taxon>Murinae</taxon>
        <taxon>Mus</taxon>
        <taxon>Mus</taxon>
    </lineage>
</organism>
<reference key="1">
    <citation type="journal article" date="2005" name="Science">
        <title>The transcriptional landscape of the mammalian genome.</title>
        <authorList>
            <person name="Carninci P."/>
            <person name="Kasukawa T."/>
            <person name="Katayama S."/>
            <person name="Gough J."/>
            <person name="Frith M.C."/>
            <person name="Maeda N."/>
            <person name="Oyama R."/>
            <person name="Ravasi T."/>
            <person name="Lenhard B."/>
            <person name="Wells C."/>
            <person name="Kodzius R."/>
            <person name="Shimokawa K."/>
            <person name="Bajic V.B."/>
            <person name="Brenner S.E."/>
            <person name="Batalov S."/>
            <person name="Forrest A.R."/>
            <person name="Zavolan M."/>
            <person name="Davis M.J."/>
            <person name="Wilming L.G."/>
            <person name="Aidinis V."/>
            <person name="Allen J.E."/>
            <person name="Ambesi-Impiombato A."/>
            <person name="Apweiler R."/>
            <person name="Aturaliya R.N."/>
            <person name="Bailey T.L."/>
            <person name="Bansal M."/>
            <person name="Baxter L."/>
            <person name="Beisel K.W."/>
            <person name="Bersano T."/>
            <person name="Bono H."/>
            <person name="Chalk A.M."/>
            <person name="Chiu K.P."/>
            <person name="Choudhary V."/>
            <person name="Christoffels A."/>
            <person name="Clutterbuck D.R."/>
            <person name="Crowe M.L."/>
            <person name="Dalla E."/>
            <person name="Dalrymple B.P."/>
            <person name="de Bono B."/>
            <person name="Della Gatta G."/>
            <person name="di Bernardo D."/>
            <person name="Down T."/>
            <person name="Engstrom P."/>
            <person name="Fagiolini M."/>
            <person name="Faulkner G."/>
            <person name="Fletcher C.F."/>
            <person name="Fukushima T."/>
            <person name="Furuno M."/>
            <person name="Futaki S."/>
            <person name="Gariboldi M."/>
            <person name="Georgii-Hemming P."/>
            <person name="Gingeras T.R."/>
            <person name="Gojobori T."/>
            <person name="Green R.E."/>
            <person name="Gustincich S."/>
            <person name="Harbers M."/>
            <person name="Hayashi Y."/>
            <person name="Hensch T.K."/>
            <person name="Hirokawa N."/>
            <person name="Hill D."/>
            <person name="Huminiecki L."/>
            <person name="Iacono M."/>
            <person name="Ikeo K."/>
            <person name="Iwama A."/>
            <person name="Ishikawa T."/>
            <person name="Jakt M."/>
            <person name="Kanapin A."/>
            <person name="Katoh M."/>
            <person name="Kawasawa Y."/>
            <person name="Kelso J."/>
            <person name="Kitamura H."/>
            <person name="Kitano H."/>
            <person name="Kollias G."/>
            <person name="Krishnan S.P."/>
            <person name="Kruger A."/>
            <person name="Kummerfeld S.K."/>
            <person name="Kurochkin I.V."/>
            <person name="Lareau L.F."/>
            <person name="Lazarevic D."/>
            <person name="Lipovich L."/>
            <person name="Liu J."/>
            <person name="Liuni S."/>
            <person name="McWilliam S."/>
            <person name="Madan Babu M."/>
            <person name="Madera M."/>
            <person name="Marchionni L."/>
            <person name="Matsuda H."/>
            <person name="Matsuzawa S."/>
            <person name="Miki H."/>
            <person name="Mignone F."/>
            <person name="Miyake S."/>
            <person name="Morris K."/>
            <person name="Mottagui-Tabar S."/>
            <person name="Mulder N."/>
            <person name="Nakano N."/>
            <person name="Nakauchi H."/>
            <person name="Ng P."/>
            <person name="Nilsson R."/>
            <person name="Nishiguchi S."/>
            <person name="Nishikawa S."/>
            <person name="Nori F."/>
            <person name="Ohara O."/>
            <person name="Okazaki Y."/>
            <person name="Orlando V."/>
            <person name="Pang K.C."/>
            <person name="Pavan W.J."/>
            <person name="Pavesi G."/>
            <person name="Pesole G."/>
            <person name="Petrovsky N."/>
            <person name="Piazza S."/>
            <person name="Reed J."/>
            <person name="Reid J.F."/>
            <person name="Ring B.Z."/>
            <person name="Ringwald M."/>
            <person name="Rost B."/>
            <person name="Ruan Y."/>
            <person name="Salzberg S.L."/>
            <person name="Sandelin A."/>
            <person name="Schneider C."/>
            <person name="Schoenbach C."/>
            <person name="Sekiguchi K."/>
            <person name="Semple C.A."/>
            <person name="Seno S."/>
            <person name="Sessa L."/>
            <person name="Sheng Y."/>
            <person name="Shibata Y."/>
            <person name="Shimada H."/>
            <person name="Shimada K."/>
            <person name="Silva D."/>
            <person name="Sinclair B."/>
            <person name="Sperling S."/>
            <person name="Stupka E."/>
            <person name="Sugiura K."/>
            <person name="Sultana R."/>
            <person name="Takenaka Y."/>
            <person name="Taki K."/>
            <person name="Tammoja K."/>
            <person name="Tan S.L."/>
            <person name="Tang S."/>
            <person name="Taylor M.S."/>
            <person name="Tegner J."/>
            <person name="Teichmann S.A."/>
            <person name="Ueda H.R."/>
            <person name="van Nimwegen E."/>
            <person name="Verardo R."/>
            <person name="Wei C.L."/>
            <person name="Yagi K."/>
            <person name="Yamanishi H."/>
            <person name="Zabarovsky E."/>
            <person name="Zhu S."/>
            <person name="Zimmer A."/>
            <person name="Hide W."/>
            <person name="Bult C."/>
            <person name="Grimmond S.M."/>
            <person name="Teasdale R.D."/>
            <person name="Liu E.T."/>
            <person name="Brusic V."/>
            <person name="Quackenbush J."/>
            <person name="Wahlestedt C."/>
            <person name="Mattick J.S."/>
            <person name="Hume D.A."/>
            <person name="Kai C."/>
            <person name="Sasaki D."/>
            <person name="Tomaru Y."/>
            <person name="Fukuda S."/>
            <person name="Kanamori-Katayama M."/>
            <person name="Suzuki M."/>
            <person name="Aoki J."/>
            <person name="Arakawa T."/>
            <person name="Iida J."/>
            <person name="Imamura K."/>
            <person name="Itoh M."/>
            <person name="Kato T."/>
            <person name="Kawaji H."/>
            <person name="Kawagashira N."/>
            <person name="Kawashima T."/>
            <person name="Kojima M."/>
            <person name="Kondo S."/>
            <person name="Konno H."/>
            <person name="Nakano K."/>
            <person name="Ninomiya N."/>
            <person name="Nishio T."/>
            <person name="Okada M."/>
            <person name="Plessy C."/>
            <person name="Shibata K."/>
            <person name="Shiraki T."/>
            <person name="Suzuki S."/>
            <person name="Tagami M."/>
            <person name="Waki K."/>
            <person name="Watahiki A."/>
            <person name="Okamura-Oho Y."/>
            <person name="Suzuki H."/>
            <person name="Kawai J."/>
            <person name="Hayashizaki Y."/>
        </authorList>
    </citation>
    <scope>NUCLEOTIDE SEQUENCE [LARGE SCALE MRNA]</scope>
    <source>
        <strain>C57BL/6J</strain>
        <tissue>Embryo</tissue>
        <tissue>Placenta</tissue>
        <tissue>Spinal cord</tissue>
    </source>
</reference>
<reference key="2">
    <citation type="submission" date="2005-02" db="EMBL/GenBank/DDBJ databases">
        <title>Prediction of the coding sequences of mouse homologues of KIAA gene. The complete nucleotide sequences of mouse KIAA-homologous cDNAs identified by screening of terminal sequences of cDNA clones randomly sampled from size-fractionated libraries.</title>
        <authorList>
            <person name="Okazaki N."/>
            <person name="Kikuno R.F."/>
            <person name="Ohara R."/>
            <person name="Inamoto S."/>
            <person name="Nagase T."/>
            <person name="Ohara O."/>
            <person name="Koga H."/>
        </authorList>
    </citation>
    <scope>NUCLEOTIDE SEQUENCE [LARGE SCALE MRNA]</scope>
    <source>
        <tissue>Brain</tissue>
    </source>
</reference>
<reference key="3">
    <citation type="journal article" date="2004" name="Genome Res.">
        <title>The status, quality, and expansion of the NIH full-length cDNA project: the Mammalian Gene Collection (MGC).</title>
        <authorList>
            <consortium name="The MGC Project Team"/>
        </authorList>
    </citation>
    <scope>NUCLEOTIDE SEQUENCE [LARGE SCALE MRNA]</scope>
    <source>
        <strain>CD-1</strain>
        <tissue>Neural stem cell</tissue>
    </source>
</reference>
<evidence type="ECO:0000250" key="1"/>
<evidence type="ECO:0000250" key="2">
    <source>
        <dbReference type="UniProtKB" id="Q6UXH8"/>
    </source>
</evidence>
<evidence type="ECO:0000255" key="3"/>
<evidence type="ECO:0000255" key="4">
    <source>
        <dbReference type="PROSITE-ProRule" id="PRU00076"/>
    </source>
</evidence>
<evidence type="ECO:0000256" key="5">
    <source>
        <dbReference type="SAM" id="MobiDB-lite"/>
    </source>
</evidence>
<evidence type="ECO:0000305" key="6"/>
<name>CCBE1_MOUSE</name>
<accession>Q3MI99</accession>
<accession>A7MCU5</accession>
<accession>Q5DTT5</accession>
<accession>Q8BFW1</accession>
<accession>Q8BMT1</accession>
<feature type="signal peptide" evidence="3">
    <location>
        <begin position="1"/>
        <end position="35"/>
    </location>
</feature>
<feature type="chain" id="PRO_0000279517" description="Collagen and calcium-binding EGF domain-containing protein 1">
    <location>
        <begin position="36"/>
        <end position="408"/>
    </location>
</feature>
<feature type="domain" description="EGF-like; calcium-binding" evidence="4">
    <location>
        <begin position="135"/>
        <end position="176"/>
    </location>
</feature>
<feature type="domain" description="Collagen-like 1">
    <location>
        <begin position="247"/>
        <end position="292"/>
    </location>
</feature>
<feature type="domain" description="Collagen-like 2">
    <location>
        <begin position="302"/>
        <end position="335"/>
    </location>
</feature>
<feature type="region of interest" description="Disordered" evidence="5">
    <location>
        <begin position="246"/>
        <end position="335"/>
    </location>
</feature>
<feature type="region of interest" description="Disordered" evidence="5">
    <location>
        <begin position="361"/>
        <end position="408"/>
    </location>
</feature>
<feature type="compositionally biased region" description="Pro residues" evidence="5">
    <location>
        <begin position="272"/>
        <end position="281"/>
    </location>
</feature>
<feature type="compositionally biased region" description="Low complexity" evidence="5">
    <location>
        <begin position="283"/>
        <end position="294"/>
    </location>
</feature>
<feature type="compositionally biased region" description="Pro residues" evidence="5">
    <location>
        <begin position="325"/>
        <end position="334"/>
    </location>
</feature>
<feature type="compositionally biased region" description="Basic and acidic residues" evidence="5">
    <location>
        <begin position="390"/>
        <end position="402"/>
    </location>
</feature>
<feature type="glycosylation site" description="N-linked (GlcNAc...) asparagine" evidence="3">
    <location>
        <position position="143"/>
    </location>
</feature>
<feature type="glycosylation site" description="N-linked (GlcNAc...) asparagine" evidence="3">
    <location>
        <position position="183"/>
    </location>
</feature>
<feature type="glycosylation site" description="O-linked (Xyl...) (chondroitin sulfate) serine" evidence="2">
    <location>
        <position position="387"/>
    </location>
</feature>
<feature type="disulfide bond" evidence="4">
    <location>
        <begin position="139"/>
        <end position="151"/>
    </location>
</feature>
<feature type="disulfide bond" evidence="4">
    <location>
        <begin position="147"/>
        <end position="160"/>
    </location>
</feature>
<feature type="disulfide bond" evidence="4">
    <location>
        <begin position="162"/>
        <end position="175"/>
    </location>
</feature>
<feature type="sequence conflict" description="In Ref. 2; BAD90476." evidence="6" ref="2">
    <original>K</original>
    <variation>E</variation>
    <location>
        <position position="77"/>
    </location>
</feature>
<feature type="sequence conflict" description="In Ref. 3; AAI03804." evidence="6" ref="3">
    <original>P</original>
    <variation>L</variation>
    <location>
        <position position="277"/>
    </location>
</feature>
<feature type="sequence conflict" description="In Ref. 1; BAC25916." evidence="6" ref="1">
    <original>R</original>
    <variation>Q</variation>
    <location>
        <position position="284"/>
    </location>
</feature>
<comment type="function">
    <text evidence="1">Required for lymphangioblast budding and angiogenic sprouting from venous endothelium during embryogenesis.</text>
</comment>
<comment type="subcellular location">
    <subcellularLocation>
        <location evidence="2">Secreted</location>
    </subcellularLocation>
</comment>
<comment type="similarity">
    <text evidence="6">Belongs to the CCBE1 family.</text>
</comment>
<comment type="sequence caution" evidence="6">
    <conflict type="erroneous initiation">
        <sequence resource="EMBL-CDS" id="BAD90476"/>
    </conflict>
</comment>
<gene>
    <name type="primary">Ccbe1</name>
    <name type="synonym">Kiaa1983</name>
</gene>